<dbReference type="EMBL" id="CP001177">
    <property type="protein sequence ID" value="ACJ80021.1"/>
    <property type="molecule type" value="Genomic_DNA"/>
</dbReference>
<dbReference type="KEGG" id="bcr:BCAH187_A4826"/>
<dbReference type="HOGENOM" id="CLU_085634_0_0_9"/>
<dbReference type="Proteomes" id="UP000002214">
    <property type="component" value="Chromosome"/>
</dbReference>
<dbReference type="HAMAP" id="MF_01548">
    <property type="entry name" value="UPF0354"/>
    <property type="match status" value="1"/>
</dbReference>
<dbReference type="InterPro" id="IPR010838">
    <property type="entry name" value="DUF1444"/>
</dbReference>
<dbReference type="NCBIfam" id="NF010189">
    <property type="entry name" value="PRK13668.1"/>
    <property type="match status" value="1"/>
</dbReference>
<dbReference type="Pfam" id="PF07285">
    <property type="entry name" value="DUF1444"/>
    <property type="match status" value="1"/>
</dbReference>
<dbReference type="PIRSF" id="PIRSF012562">
    <property type="entry name" value="UCP012562"/>
    <property type="match status" value="1"/>
</dbReference>
<comment type="similarity">
    <text evidence="1">Belongs to the UPF0354 family.</text>
</comment>
<gene>
    <name type="ordered locus">BCAH187_A4826</name>
</gene>
<accession>B7HSM8</accession>
<feature type="chain" id="PRO_1000199608" description="UPF0354 protein BCAH187_A4826">
    <location>
        <begin position="1"/>
        <end position="270"/>
    </location>
</feature>
<protein>
    <recommendedName>
        <fullName evidence="1">UPF0354 protein BCAH187_A4826</fullName>
    </recommendedName>
</protein>
<reference key="1">
    <citation type="submission" date="2008-10" db="EMBL/GenBank/DDBJ databases">
        <title>Genome sequence of Bacillus cereus AH187.</title>
        <authorList>
            <person name="Dodson R.J."/>
            <person name="Durkin A.S."/>
            <person name="Rosovitz M.J."/>
            <person name="Rasko D.A."/>
            <person name="Kolsto A.B."/>
            <person name="Okstad O.A."/>
            <person name="Ravel J."/>
            <person name="Sutton G."/>
        </authorList>
    </citation>
    <scope>NUCLEOTIDE SEQUENCE [LARGE SCALE GENOMIC DNA]</scope>
    <source>
        <strain>AH187</strain>
    </source>
</reference>
<organism>
    <name type="scientific">Bacillus cereus (strain AH187)</name>
    <dbReference type="NCBI Taxonomy" id="405534"/>
    <lineage>
        <taxon>Bacteria</taxon>
        <taxon>Bacillati</taxon>
        <taxon>Bacillota</taxon>
        <taxon>Bacilli</taxon>
        <taxon>Bacillales</taxon>
        <taxon>Bacillaceae</taxon>
        <taxon>Bacillus</taxon>
        <taxon>Bacillus cereus group</taxon>
    </lineage>
</organism>
<proteinExistence type="inferred from homology"/>
<name>Y4826_BACC7</name>
<evidence type="ECO:0000255" key="1">
    <source>
        <dbReference type="HAMAP-Rule" id="MF_01548"/>
    </source>
</evidence>
<sequence length="270" mass="31060">MKMTSKKMKDELMKRLSRPEWDFQYDSEKEVLRIEQKDSKKGINVSLPGVVAKWEVNKEKAIEEVAYYVQEALIAMHKEENSAAKILPVIRSTSFPKQAEEGNPFIMTDHTAETRIYYALDSNKTYRLIDERLLQKLGLTEQQVREMALFNARSLSYEFKQDTVAGNTFYFLNTNDGYDATRILNESLLQSMREKISGDMVVAVPHQDVLIIADIVNEIGYDIIAQMTMKFFAEGHVPITSLSFVYEDGDFEPIFILAKNRKKTDGKEKG</sequence>